<gene>
    <name evidence="1" type="primary">rnz</name>
    <name type="ordered locus">M1627_1242</name>
</gene>
<dbReference type="EC" id="3.1.26.11" evidence="1"/>
<dbReference type="EMBL" id="CP001401">
    <property type="protein sequence ID" value="ACP55129.1"/>
    <property type="molecule type" value="Genomic_DNA"/>
</dbReference>
<dbReference type="RefSeq" id="WP_012711200.1">
    <property type="nucleotide sequence ID" value="NC_012632.1"/>
</dbReference>
<dbReference type="SMR" id="C3N554"/>
<dbReference type="GeneID" id="84061503"/>
<dbReference type="KEGG" id="sim:M1627_1242"/>
<dbReference type="HOGENOM" id="CLU_031317_2_1_2"/>
<dbReference type="Proteomes" id="UP000002307">
    <property type="component" value="Chromosome"/>
</dbReference>
<dbReference type="GO" id="GO:0042781">
    <property type="term" value="F:3'-tRNA processing endoribonuclease activity"/>
    <property type="evidence" value="ECO:0007669"/>
    <property type="project" value="UniProtKB-UniRule"/>
</dbReference>
<dbReference type="GO" id="GO:0008270">
    <property type="term" value="F:zinc ion binding"/>
    <property type="evidence" value="ECO:0007669"/>
    <property type="project" value="UniProtKB-UniRule"/>
</dbReference>
<dbReference type="CDD" id="cd07717">
    <property type="entry name" value="RNaseZ_ZiPD-like_MBL-fold"/>
    <property type="match status" value="1"/>
</dbReference>
<dbReference type="FunFam" id="3.60.15.10:FF:000075">
    <property type="entry name" value="Ribonuclease Z"/>
    <property type="match status" value="1"/>
</dbReference>
<dbReference type="Gene3D" id="3.60.15.10">
    <property type="entry name" value="Ribonuclease Z/Hydroxyacylglutathione hydrolase-like"/>
    <property type="match status" value="1"/>
</dbReference>
<dbReference type="HAMAP" id="MF_01818">
    <property type="entry name" value="RNase_Z_BN"/>
    <property type="match status" value="1"/>
</dbReference>
<dbReference type="InterPro" id="IPR001279">
    <property type="entry name" value="Metallo-B-lactamas"/>
</dbReference>
<dbReference type="InterPro" id="IPR036866">
    <property type="entry name" value="RibonucZ/Hydroxyglut_hydro"/>
</dbReference>
<dbReference type="InterPro" id="IPR013471">
    <property type="entry name" value="RNase_Z/BN"/>
</dbReference>
<dbReference type="NCBIfam" id="NF000801">
    <property type="entry name" value="PRK00055.1-3"/>
    <property type="match status" value="1"/>
</dbReference>
<dbReference type="NCBIfam" id="TIGR02651">
    <property type="entry name" value="RNase_Z"/>
    <property type="match status" value="1"/>
</dbReference>
<dbReference type="PANTHER" id="PTHR46018">
    <property type="entry name" value="ZINC PHOSPHODIESTERASE ELAC PROTEIN 1"/>
    <property type="match status" value="1"/>
</dbReference>
<dbReference type="PANTHER" id="PTHR46018:SF2">
    <property type="entry name" value="ZINC PHOSPHODIESTERASE ELAC PROTEIN 1"/>
    <property type="match status" value="1"/>
</dbReference>
<dbReference type="Pfam" id="PF00753">
    <property type="entry name" value="Lactamase_B"/>
    <property type="match status" value="1"/>
</dbReference>
<dbReference type="Pfam" id="PF12706">
    <property type="entry name" value="Lactamase_B_2"/>
    <property type="match status" value="1"/>
</dbReference>
<dbReference type="SUPFAM" id="SSF56281">
    <property type="entry name" value="Metallo-hydrolase/oxidoreductase"/>
    <property type="match status" value="1"/>
</dbReference>
<keyword id="KW-0255">Endonuclease</keyword>
<keyword id="KW-0378">Hydrolase</keyword>
<keyword id="KW-0479">Metal-binding</keyword>
<keyword id="KW-0540">Nuclease</keyword>
<keyword id="KW-0819">tRNA processing</keyword>
<keyword id="KW-0862">Zinc</keyword>
<comment type="function">
    <text evidence="1">Zinc phosphodiesterase, which displays some tRNA 3'-processing endonuclease activity. Probably involved in tRNA maturation, by removing a 3'-trailer from precursor tRNA.</text>
</comment>
<comment type="catalytic activity">
    <reaction evidence="1">
        <text>Endonucleolytic cleavage of RNA, removing extra 3' nucleotides from tRNA precursor, generating 3' termini of tRNAs. A 3'-hydroxy group is left at the tRNA terminus and a 5'-phosphoryl group is left at the trailer molecule.</text>
        <dbReference type="EC" id="3.1.26.11"/>
    </reaction>
</comment>
<comment type="cofactor">
    <cofactor evidence="1">
        <name>Zn(2+)</name>
        <dbReference type="ChEBI" id="CHEBI:29105"/>
    </cofactor>
    <text evidence="1">Binds 2 Zn(2+) ions.</text>
</comment>
<comment type="subunit">
    <text evidence="1">Homodimer.</text>
</comment>
<comment type="similarity">
    <text evidence="1">Belongs to the RNase Z family.</text>
</comment>
<accession>C3N554</accession>
<proteinExistence type="inferred from homology"/>
<sequence length="291" mass="32953">MIQIFFLGTGAGSPSKKRKLPAFLVRREGLNILLDCGEGTQYTLMNNKLGINSIKIIGITHMHGDHVFGLLGVIASMGLLDRKETLYILGPRDLKDFLYTSFEYSKFNPSFKIEFIDNYNDQNITIATFKTCHTVESQGYLISERDRVKIDEEKLEKEKIKDWRVMRKLKEGKTVEYNGKFLKPEDYLVIKRGLKVAYTGDTIPCQSVIESVKGVDLLIHDSTFLNEPSACTYGHSNVADAAKVALEASVKLLALTHISPRYEDVTEHLKVARRIFPKSILPDDLSYITLK</sequence>
<feature type="chain" id="PRO_1000216014" description="Ribonuclease Z">
    <location>
        <begin position="1"/>
        <end position="291"/>
    </location>
</feature>
<feature type="active site" description="Proton acceptor" evidence="1">
    <location>
        <position position="65"/>
    </location>
</feature>
<feature type="binding site" evidence="1">
    <location>
        <position position="61"/>
    </location>
    <ligand>
        <name>Zn(2+)</name>
        <dbReference type="ChEBI" id="CHEBI:29105"/>
        <label>1</label>
        <note>catalytic</note>
    </ligand>
</feature>
<feature type="binding site" evidence="1">
    <location>
        <position position="63"/>
    </location>
    <ligand>
        <name>Zn(2+)</name>
        <dbReference type="ChEBI" id="CHEBI:29105"/>
        <label>1</label>
        <note>catalytic</note>
    </ligand>
</feature>
<feature type="binding site" evidence="1">
    <location>
        <position position="65"/>
    </location>
    <ligand>
        <name>Zn(2+)</name>
        <dbReference type="ChEBI" id="CHEBI:29105"/>
        <label>2</label>
        <note>catalytic</note>
    </ligand>
</feature>
<feature type="binding site" evidence="1">
    <location>
        <position position="66"/>
    </location>
    <ligand>
        <name>Zn(2+)</name>
        <dbReference type="ChEBI" id="CHEBI:29105"/>
        <label>2</label>
        <note>catalytic</note>
    </ligand>
</feature>
<feature type="binding site" evidence="1">
    <location>
        <position position="133"/>
    </location>
    <ligand>
        <name>Zn(2+)</name>
        <dbReference type="ChEBI" id="CHEBI:29105"/>
        <label>1</label>
        <note>catalytic</note>
    </ligand>
</feature>
<feature type="binding site" evidence="1">
    <location>
        <position position="201"/>
    </location>
    <ligand>
        <name>Zn(2+)</name>
        <dbReference type="ChEBI" id="CHEBI:29105"/>
        <label>1</label>
        <note>catalytic</note>
    </ligand>
</feature>
<feature type="binding site" evidence="1">
    <location>
        <position position="201"/>
    </location>
    <ligand>
        <name>Zn(2+)</name>
        <dbReference type="ChEBI" id="CHEBI:29105"/>
        <label>2</label>
        <note>catalytic</note>
    </ligand>
</feature>
<feature type="binding site" evidence="1">
    <location>
        <position position="257"/>
    </location>
    <ligand>
        <name>Zn(2+)</name>
        <dbReference type="ChEBI" id="CHEBI:29105"/>
        <label>2</label>
        <note>catalytic</note>
    </ligand>
</feature>
<organism>
    <name type="scientific">Saccharolobus islandicus (strain M.16.27)</name>
    <name type="common">Sulfolobus islandicus</name>
    <dbReference type="NCBI Taxonomy" id="427318"/>
    <lineage>
        <taxon>Archaea</taxon>
        <taxon>Thermoproteota</taxon>
        <taxon>Thermoprotei</taxon>
        <taxon>Sulfolobales</taxon>
        <taxon>Sulfolobaceae</taxon>
        <taxon>Saccharolobus</taxon>
    </lineage>
</organism>
<name>RNZ_SACI3</name>
<protein>
    <recommendedName>
        <fullName evidence="1">Ribonuclease Z</fullName>
        <shortName evidence="1">RNase Z</shortName>
        <ecNumber evidence="1">3.1.26.11</ecNumber>
    </recommendedName>
    <alternativeName>
        <fullName evidence="1">tRNA 3 endonuclease</fullName>
    </alternativeName>
    <alternativeName>
        <fullName evidence="1">tRNase Z</fullName>
    </alternativeName>
</protein>
<reference key="1">
    <citation type="journal article" date="2009" name="Proc. Natl. Acad. Sci. U.S.A.">
        <title>Biogeography of the Sulfolobus islandicus pan-genome.</title>
        <authorList>
            <person name="Reno M.L."/>
            <person name="Held N.L."/>
            <person name="Fields C.J."/>
            <person name="Burke P.V."/>
            <person name="Whitaker R.J."/>
        </authorList>
    </citation>
    <scope>NUCLEOTIDE SEQUENCE [LARGE SCALE GENOMIC DNA]</scope>
    <source>
        <strain>M.16.27</strain>
    </source>
</reference>
<evidence type="ECO:0000255" key="1">
    <source>
        <dbReference type="HAMAP-Rule" id="MF_01818"/>
    </source>
</evidence>